<keyword id="KW-0150">Chloroplast</keyword>
<keyword id="KW-0472">Membrane</keyword>
<keyword id="KW-0520">NAD</keyword>
<keyword id="KW-0521">NADP</keyword>
<keyword id="KW-0934">Plastid</keyword>
<keyword id="KW-0618">Plastoquinone</keyword>
<keyword id="KW-0874">Quinone</keyword>
<keyword id="KW-0793">Thylakoid</keyword>
<keyword id="KW-1278">Translocase</keyword>
<keyword id="KW-0812">Transmembrane</keyword>
<keyword id="KW-1133">Transmembrane helix</keyword>
<keyword id="KW-0813">Transport</keyword>
<protein>
    <recommendedName>
        <fullName>NAD(P)H-quinone oxidoreductase subunit 6, chloroplastic</fullName>
        <ecNumber>7.1.1.-</ecNumber>
    </recommendedName>
    <alternativeName>
        <fullName>NAD(P)H dehydrogenase subunit 6</fullName>
    </alternativeName>
    <alternativeName>
        <fullName>NADH-plastoquinone oxidoreductase subunit 6</fullName>
    </alternativeName>
</protein>
<name>NU6C_NANDO</name>
<gene>
    <name type="primary">ndhG</name>
</gene>
<accession>Q09FQ7</accession>
<geneLocation type="chloroplast"/>
<organism>
    <name type="scientific">Nandina domestica</name>
    <name type="common">Heavenly bamboo</name>
    <dbReference type="NCBI Taxonomy" id="41776"/>
    <lineage>
        <taxon>Eukaryota</taxon>
        <taxon>Viridiplantae</taxon>
        <taxon>Streptophyta</taxon>
        <taxon>Embryophyta</taxon>
        <taxon>Tracheophyta</taxon>
        <taxon>Spermatophyta</taxon>
        <taxon>Magnoliopsida</taxon>
        <taxon>Ranunculales</taxon>
        <taxon>Berberidaceae</taxon>
        <taxon>Nandinoideae</taxon>
        <taxon>Nandineae</taxon>
        <taxon>Nandina</taxon>
    </lineage>
</organism>
<dbReference type="EC" id="7.1.1.-"/>
<dbReference type="EMBL" id="DQ923117">
    <property type="protein sequence ID" value="ABI49918.1"/>
    <property type="molecule type" value="Genomic_DNA"/>
</dbReference>
<dbReference type="RefSeq" id="YP_740704.1">
    <property type="nucleotide sequence ID" value="NC_008336.1"/>
</dbReference>
<dbReference type="SMR" id="Q09FQ7"/>
<dbReference type="GeneID" id="4271652"/>
<dbReference type="GO" id="GO:0009535">
    <property type="term" value="C:chloroplast thylakoid membrane"/>
    <property type="evidence" value="ECO:0007669"/>
    <property type="project" value="UniProtKB-SubCell"/>
</dbReference>
<dbReference type="GO" id="GO:0008137">
    <property type="term" value="F:NADH dehydrogenase (ubiquinone) activity"/>
    <property type="evidence" value="ECO:0007669"/>
    <property type="project" value="InterPro"/>
</dbReference>
<dbReference type="GO" id="GO:0048038">
    <property type="term" value="F:quinone binding"/>
    <property type="evidence" value="ECO:0007669"/>
    <property type="project" value="UniProtKB-KW"/>
</dbReference>
<dbReference type="FunFam" id="1.20.120.1200:FF:000002">
    <property type="entry name" value="NAD(P)H-quinone oxidoreductase subunit 6, chloroplastic"/>
    <property type="match status" value="1"/>
</dbReference>
<dbReference type="Gene3D" id="1.20.120.1200">
    <property type="entry name" value="NADH-ubiquinone/plastoquinone oxidoreductase chain 6, subunit NuoJ"/>
    <property type="match status" value="1"/>
</dbReference>
<dbReference type="InterPro" id="IPR050290">
    <property type="entry name" value="NAD(P)H-Q_Oxidoreduct_6"/>
</dbReference>
<dbReference type="InterPro" id="IPR001457">
    <property type="entry name" value="NADH_UbQ/plastoQ_OxRdtase_su6"/>
</dbReference>
<dbReference type="InterPro" id="IPR042106">
    <property type="entry name" value="Nuo/plastoQ_OxRdtase_6_NuoJ"/>
</dbReference>
<dbReference type="PANTHER" id="PTHR48479">
    <property type="entry name" value="NAD(P)H-QUINONE OXIDOREDUCTASE SUBUNIT 6, CHLOROPLASTIC"/>
    <property type="match status" value="1"/>
</dbReference>
<dbReference type="PANTHER" id="PTHR48479:SF1">
    <property type="entry name" value="NAD(P)H-QUINONE OXIDOREDUCTASE SUBUNIT 6, CHLOROPLASTIC"/>
    <property type="match status" value="1"/>
</dbReference>
<dbReference type="Pfam" id="PF00499">
    <property type="entry name" value="Oxidored_q3"/>
    <property type="match status" value="1"/>
</dbReference>
<feature type="chain" id="PRO_0000360270" description="NAD(P)H-quinone oxidoreductase subunit 6, chloroplastic">
    <location>
        <begin position="1"/>
        <end position="176"/>
    </location>
</feature>
<feature type="transmembrane region" description="Helical" evidence="2">
    <location>
        <begin position="10"/>
        <end position="30"/>
    </location>
</feature>
<feature type="transmembrane region" description="Helical" evidence="2">
    <location>
        <begin position="33"/>
        <end position="53"/>
    </location>
</feature>
<feature type="transmembrane region" description="Helical" evidence="2">
    <location>
        <begin position="61"/>
        <end position="81"/>
    </location>
</feature>
<feature type="transmembrane region" description="Helical" evidence="2">
    <location>
        <begin position="92"/>
        <end position="112"/>
    </location>
</feature>
<feature type="transmembrane region" description="Helical" evidence="2">
    <location>
        <begin position="152"/>
        <end position="172"/>
    </location>
</feature>
<evidence type="ECO:0000250" key="1"/>
<evidence type="ECO:0000255" key="2"/>
<evidence type="ECO:0000305" key="3"/>
<comment type="function">
    <text evidence="1">NDH shuttles electrons from NAD(P)H:plastoquinone, via FMN and iron-sulfur (Fe-S) centers, to quinones in the photosynthetic chain and possibly in a chloroplast respiratory chain. The immediate electron acceptor for the enzyme in this species is believed to be plastoquinone. Couples the redox reaction to proton translocation, and thus conserves the redox energy in a proton gradient (By similarity).</text>
</comment>
<comment type="catalytic activity">
    <reaction>
        <text>a plastoquinone + NADH + (n+1) H(+)(in) = a plastoquinol + NAD(+) + n H(+)(out)</text>
        <dbReference type="Rhea" id="RHEA:42608"/>
        <dbReference type="Rhea" id="RHEA-COMP:9561"/>
        <dbReference type="Rhea" id="RHEA-COMP:9562"/>
        <dbReference type="ChEBI" id="CHEBI:15378"/>
        <dbReference type="ChEBI" id="CHEBI:17757"/>
        <dbReference type="ChEBI" id="CHEBI:57540"/>
        <dbReference type="ChEBI" id="CHEBI:57945"/>
        <dbReference type="ChEBI" id="CHEBI:62192"/>
    </reaction>
</comment>
<comment type="catalytic activity">
    <reaction>
        <text>a plastoquinone + NADPH + (n+1) H(+)(in) = a plastoquinol + NADP(+) + n H(+)(out)</text>
        <dbReference type="Rhea" id="RHEA:42612"/>
        <dbReference type="Rhea" id="RHEA-COMP:9561"/>
        <dbReference type="Rhea" id="RHEA-COMP:9562"/>
        <dbReference type="ChEBI" id="CHEBI:15378"/>
        <dbReference type="ChEBI" id="CHEBI:17757"/>
        <dbReference type="ChEBI" id="CHEBI:57783"/>
        <dbReference type="ChEBI" id="CHEBI:58349"/>
        <dbReference type="ChEBI" id="CHEBI:62192"/>
    </reaction>
</comment>
<comment type="subunit">
    <text evidence="1">NDH is composed of at least 16 different subunits, 5 of which are encoded in the nucleus.</text>
</comment>
<comment type="subcellular location">
    <subcellularLocation>
        <location evidence="1">Plastid</location>
        <location evidence="1">Chloroplast thylakoid membrane</location>
        <topology evidence="1">Multi-pass membrane protein</topology>
    </subcellularLocation>
</comment>
<comment type="similarity">
    <text evidence="3">Belongs to the complex I subunit 6 family.</text>
</comment>
<sequence>MDLPAPIHDFLLVFLGLGLIVGGLGVVLLTNPIYSAFSLGLVLVCISLFHIPANSHFVAAAQLLIYVGAINVLIVFAVMFMNGSEYYNDFHLWTVGDGVTSLVCTSIFVSLITTISDTSWYGIIWTTRSNQIIEQDLINKGQQLGIHLSTDFFLPFELISIILLVALIGAIAMARQ</sequence>
<reference key="1">
    <citation type="journal article" date="2006" name="BMC Plant Biol.">
        <title>Rapid and accurate pyrosequencing of angiosperm plastid genomes.</title>
        <authorList>
            <person name="Moore M.J."/>
            <person name="Dhingra A."/>
            <person name="Soltis P.S."/>
            <person name="Shaw R."/>
            <person name="Farmerie W.G."/>
            <person name="Folta K.M."/>
            <person name="Soltis D.E."/>
        </authorList>
    </citation>
    <scope>NUCLEOTIDE SEQUENCE [LARGE SCALE GENOMIC DNA]</scope>
</reference>
<proteinExistence type="inferred from homology"/>